<feature type="chain" id="PRO_0000316569" description="Ribosome biogenesis protein erb1">
    <location>
        <begin position="1"/>
        <end position="740"/>
    </location>
</feature>
<feature type="repeat" description="WD 1">
    <location>
        <begin position="381"/>
        <end position="420"/>
    </location>
</feature>
<feature type="repeat" description="WD 2">
    <location>
        <begin position="526"/>
        <end position="568"/>
    </location>
</feature>
<feature type="repeat" description="WD 3">
    <location>
        <begin position="571"/>
        <end position="609"/>
    </location>
</feature>
<feature type="repeat" description="WD 4">
    <location>
        <begin position="612"/>
        <end position="651"/>
    </location>
</feature>
<feature type="repeat" description="WD 5">
    <location>
        <begin position="655"/>
        <end position="694"/>
    </location>
</feature>
<feature type="repeat" description="WD 6">
    <location>
        <begin position="710"/>
        <end position="740"/>
    </location>
</feature>
<feature type="region of interest" description="Disordered" evidence="2">
    <location>
        <begin position="1"/>
        <end position="121"/>
    </location>
</feature>
<feature type="region of interest" description="Disordered" evidence="2">
    <location>
        <begin position="251"/>
        <end position="304"/>
    </location>
</feature>
<feature type="compositionally biased region" description="Basic residues" evidence="2">
    <location>
        <begin position="1"/>
        <end position="14"/>
    </location>
</feature>
<feature type="compositionally biased region" description="Basic and acidic residues" evidence="2">
    <location>
        <begin position="21"/>
        <end position="31"/>
    </location>
</feature>
<feature type="compositionally biased region" description="Basic and acidic residues" evidence="2">
    <location>
        <begin position="44"/>
        <end position="55"/>
    </location>
</feature>
<feature type="compositionally biased region" description="Acidic residues" evidence="2">
    <location>
        <begin position="86"/>
        <end position="103"/>
    </location>
</feature>
<feature type="compositionally biased region" description="Basic and acidic residues" evidence="2">
    <location>
        <begin position="252"/>
        <end position="270"/>
    </location>
</feature>
<feature type="modified residue" description="Phosphoserine" evidence="4">
    <location>
        <position position="434"/>
    </location>
</feature>
<feature type="helix" evidence="5">
    <location>
        <begin position="178"/>
        <end position="186"/>
    </location>
</feature>
<feature type="turn" evidence="5">
    <location>
        <begin position="187"/>
        <end position="189"/>
    </location>
</feature>
<feature type="strand" evidence="6">
    <location>
        <begin position="205"/>
        <end position="209"/>
    </location>
</feature>
<feature type="helix" evidence="6">
    <location>
        <begin position="222"/>
        <end position="225"/>
    </location>
</feature>
<feature type="helix" evidence="6">
    <location>
        <begin position="229"/>
        <end position="243"/>
    </location>
</feature>
<feature type="helix" evidence="6">
    <location>
        <begin position="250"/>
        <end position="255"/>
    </location>
</feature>
<feature type="strand" evidence="5">
    <location>
        <begin position="299"/>
        <end position="301"/>
    </location>
</feature>
<feature type="turn" evidence="5">
    <location>
        <begin position="320"/>
        <end position="322"/>
    </location>
</feature>
<feature type="helix" evidence="5">
    <location>
        <begin position="329"/>
        <end position="342"/>
    </location>
</feature>
<feature type="strand" evidence="5">
    <location>
        <begin position="345"/>
        <end position="348"/>
    </location>
</feature>
<feature type="strand" evidence="5">
    <location>
        <begin position="386"/>
        <end position="391"/>
    </location>
</feature>
<feature type="strand" evidence="5">
    <location>
        <begin position="393"/>
        <end position="402"/>
    </location>
</feature>
<feature type="strand" evidence="5">
    <location>
        <begin position="408"/>
        <end position="411"/>
    </location>
</feature>
<feature type="turn" evidence="5">
    <location>
        <begin position="412"/>
        <end position="414"/>
    </location>
</feature>
<feature type="strand" evidence="5">
    <location>
        <begin position="452"/>
        <end position="457"/>
    </location>
</feature>
<feature type="strand" evidence="5">
    <location>
        <begin position="466"/>
        <end position="470"/>
    </location>
</feature>
<feature type="strand" evidence="5">
    <location>
        <begin position="473"/>
        <end position="477"/>
    </location>
</feature>
<feature type="helix" evidence="5">
    <location>
        <begin position="484"/>
        <end position="494"/>
    </location>
</feature>
<feature type="strand" evidence="5">
    <location>
        <begin position="505"/>
        <end position="507"/>
    </location>
</feature>
<feature type="strand" evidence="5">
    <location>
        <begin position="521"/>
        <end position="526"/>
    </location>
</feature>
<feature type="strand" evidence="5">
    <location>
        <begin position="533"/>
        <end position="536"/>
    </location>
</feature>
<feature type="strand" evidence="5">
    <location>
        <begin position="538"/>
        <end position="546"/>
    </location>
</feature>
<feature type="strand" evidence="5">
    <location>
        <begin position="551"/>
        <end position="559"/>
    </location>
</feature>
<feature type="turn" evidence="5">
    <location>
        <begin position="560"/>
        <end position="563"/>
    </location>
</feature>
<feature type="strand" evidence="5">
    <location>
        <begin position="564"/>
        <end position="566"/>
    </location>
</feature>
<feature type="strand" evidence="5">
    <location>
        <begin position="576"/>
        <end position="581"/>
    </location>
</feature>
<feature type="strand" evidence="5">
    <location>
        <begin position="583"/>
        <end position="600"/>
    </location>
</feature>
<feature type="turn" evidence="5">
    <location>
        <begin position="601"/>
        <end position="604"/>
    </location>
</feature>
<feature type="strand" evidence="5">
    <location>
        <begin position="605"/>
        <end position="611"/>
    </location>
</feature>
<feature type="strand" evidence="5">
    <location>
        <begin position="614"/>
        <end position="622"/>
    </location>
</feature>
<feature type="strand" evidence="5">
    <location>
        <begin position="626"/>
        <end position="633"/>
    </location>
</feature>
<feature type="strand" evidence="5">
    <location>
        <begin position="638"/>
        <end position="642"/>
    </location>
</feature>
<feature type="turn" evidence="5">
    <location>
        <begin position="643"/>
        <end position="645"/>
    </location>
</feature>
<feature type="strand" evidence="5">
    <location>
        <begin position="650"/>
        <end position="653"/>
    </location>
</feature>
<feature type="strand" evidence="5">
    <location>
        <begin position="662"/>
        <end position="665"/>
    </location>
</feature>
<feature type="strand" evidence="5">
    <location>
        <begin position="667"/>
        <end position="675"/>
    </location>
</feature>
<feature type="strand" evidence="5">
    <location>
        <begin position="681"/>
        <end position="687"/>
    </location>
</feature>
<feature type="strand" evidence="5">
    <location>
        <begin position="690"/>
        <end position="693"/>
    </location>
</feature>
<feature type="strand" evidence="5">
    <location>
        <begin position="697"/>
        <end position="704"/>
    </location>
</feature>
<feature type="strand" evidence="5">
    <location>
        <begin position="715"/>
        <end position="720"/>
    </location>
</feature>
<feature type="strand" evidence="5">
    <location>
        <begin position="722"/>
        <end position="725"/>
    </location>
</feature>
<feature type="strand" evidence="5">
    <location>
        <begin position="727"/>
        <end position="731"/>
    </location>
</feature>
<feature type="strand" evidence="5">
    <location>
        <begin position="736"/>
        <end position="739"/>
    </location>
</feature>
<dbReference type="EMBL" id="CU329671">
    <property type="protein sequence ID" value="CAA20733.2"/>
    <property type="molecule type" value="Genomic_DNA"/>
</dbReference>
<dbReference type="PIR" id="T40510">
    <property type="entry name" value="T40510"/>
</dbReference>
<dbReference type="RefSeq" id="NP_596113.2">
    <property type="nucleotide sequence ID" value="NM_001022030.2"/>
</dbReference>
<dbReference type="PDB" id="8ESQ">
    <property type="method" value="EM"/>
    <property type="resolution" value="2.80 A"/>
    <property type="chains" value="m=1-740"/>
</dbReference>
<dbReference type="PDB" id="8ESR">
    <property type="method" value="EM"/>
    <property type="resolution" value="3.20 A"/>
    <property type="chains" value="m=1-740"/>
</dbReference>
<dbReference type="PDB" id="8ETG">
    <property type="method" value="EM"/>
    <property type="resolution" value="3.40 A"/>
    <property type="chains" value="m=1-740"/>
</dbReference>
<dbReference type="PDB" id="8ETH">
    <property type="method" value="EM"/>
    <property type="resolution" value="3.80 A"/>
    <property type="chains" value="m=1-740"/>
</dbReference>
<dbReference type="PDB" id="8ETI">
    <property type="method" value="EM"/>
    <property type="resolution" value="3.70 A"/>
    <property type="chains" value="m=1-740"/>
</dbReference>
<dbReference type="PDB" id="8EUG">
    <property type="method" value="EM"/>
    <property type="resolution" value="2.80 A"/>
    <property type="chains" value="m=1-740"/>
</dbReference>
<dbReference type="PDB" id="8EUI">
    <property type="method" value="EM"/>
    <property type="resolution" value="3.10 A"/>
    <property type="chains" value="m=1-740"/>
</dbReference>
<dbReference type="PDB" id="8EUP">
    <property type="method" value="EM"/>
    <property type="resolution" value="3.10 A"/>
    <property type="chains" value="m=1-740"/>
</dbReference>
<dbReference type="PDB" id="8EUY">
    <property type="method" value="EM"/>
    <property type="resolution" value="3.00 A"/>
    <property type="chains" value="m=1-740"/>
</dbReference>
<dbReference type="PDB" id="8EV3">
    <property type="method" value="EM"/>
    <property type="resolution" value="3.00 A"/>
    <property type="chains" value="m=1-740"/>
</dbReference>
<dbReference type="PDBsum" id="8ESQ"/>
<dbReference type="PDBsum" id="8ESR"/>
<dbReference type="PDBsum" id="8ETG"/>
<dbReference type="PDBsum" id="8ETH"/>
<dbReference type="PDBsum" id="8ETI"/>
<dbReference type="PDBsum" id="8EUG"/>
<dbReference type="PDBsum" id="8EUI"/>
<dbReference type="PDBsum" id="8EUP"/>
<dbReference type="PDBsum" id="8EUY"/>
<dbReference type="PDBsum" id="8EV3"/>
<dbReference type="SMR" id="O74399"/>
<dbReference type="BioGRID" id="277405">
    <property type="interactions" value="6"/>
</dbReference>
<dbReference type="FunCoup" id="O74399">
    <property type="interactions" value="511"/>
</dbReference>
<dbReference type="STRING" id="284812.O74399"/>
<dbReference type="iPTMnet" id="O74399"/>
<dbReference type="PaxDb" id="4896-SPBC4F6.13c.1"/>
<dbReference type="EnsemblFungi" id="SPBC4F6.13c.1">
    <property type="protein sequence ID" value="SPBC4F6.13c.1:pep"/>
    <property type="gene ID" value="SPBC4F6.13c"/>
</dbReference>
<dbReference type="GeneID" id="2540888"/>
<dbReference type="KEGG" id="spo:2540888"/>
<dbReference type="PomBase" id="SPBC4F6.13c">
    <property type="gene designation" value="erb1"/>
</dbReference>
<dbReference type="VEuPathDB" id="FungiDB:SPBC4F6.13c"/>
<dbReference type="eggNOG" id="KOG0650">
    <property type="taxonomic scope" value="Eukaryota"/>
</dbReference>
<dbReference type="HOGENOM" id="CLU_011390_0_1_1"/>
<dbReference type="InParanoid" id="O74399"/>
<dbReference type="OMA" id="MRPAKGE"/>
<dbReference type="Reactome" id="R-SPO-6791226">
    <property type="pathway name" value="Major pathway of rRNA processing in the nucleolus and cytosol"/>
</dbReference>
<dbReference type="PRO" id="PR:O74399"/>
<dbReference type="Proteomes" id="UP000002485">
    <property type="component" value="Chromosome II"/>
</dbReference>
<dbReference type="GO" id="GO:0005730">
    <property type="term" value="C:nucleolus"/>
    <property type="evidence" value="ECO:0007005"/>
    <property type="project" value="PomBase"/>
</dbReference>
<dbReference type="GO" id="GO:0005654">
    <property type="term" value="C:nucleoplasm"/>
    <property type="evidence" value="ECO:0007669"/>
    <property type="project" value="UniProtKB-SubCell"/>
</dbReference>
<dbReference type="GO" id="GO:0005634">
    <property type="term" value="C:nucleus"/>
    <property type="evidence" value="ECO:0007005"/>
    <property type="project" value="PomBase"/>
</dbReference>
<dbReference type="GO" id="GO:0070545">
    <property type="term" value="C:PeBoW complex"/>
    <property type="evidence" value="ECO:0000318"/>
    <property type="project" value="GO_Central"/>
</dbReference>
<dbReference type="GO" id="GO:0030684">
    <property type="term" value="C:preribosome"/>
    <property type="evidence" value="ECO:0000314"/>
    <property type="project" value="PomBase"/>
</dbReference>
<dbReference type="GO" id="GO:0030687">
    <property type="term" value="C:preribosome, large subunit precursor"/>
    <property type="evidence" value="ECO:0000318"/>
    <property type="project" value="GO_Central"/>
</dbReference>
<dbReference type="GO" id="GO:0043021">
    <property type="term" value="F:ribonucleoprotein complex binding"/>
    <property type="evidence" value="ECO:0000318"/>
    <property type="project" value="GO_Central"/>
</dbReference>
<dbReference type="GO" id="GO:1902626">
    <property type="term" value="P:assembly of large subunit precursor of preribosome"/>
    <property type="evidence" value="ECO:0000269"/>
    <property type="project" value="PomBase"/>
</dbReference>
<dbReference type="GO" id="GO:0000466">
    <property type="term" value="P:maturation of 5.8S rRNA from tricistronic rRNA transcript (SSU-rRNA, 5.8S rRNA, LSU-rRNA)"/>
    <property type="evidence" value="ECO:0007669"/>
    <property type="project" value="UniProtKB-UniRule"/>
</dbReference>
<dbReference type="GO" id="GO:0000463">
    <property type="term" value="P:maturation of LSU-rRNA from tricistronic rRNA transcript (SSU-rRNA, 5.8S rRNA, LSU-rRNA)"/>
    <property type="evidence" value="ECO:0000318"/>
    <property type="project" value="GO_Central"/>
</dbReference>
<dbReference type="FunFam" id="2.130.10.10:FF:000061">
    <property type="entry name" value="Ribosome biogenesis protein BOP1 homolog"/>
    <property type="match status" value="1"/>
</dbReference>
<dbReference type="Gene3D" id="2.130.10.10">
    <property type="entry name" value="YVTN repeat-like/Quinoprotein amine dehydrogenase"/>
    <property type="match status" value="1"/>
</dbReference>
<dbReference type="HAMAP" id="MF_03027">
    <property type="entry name" value="BOP1"/>
    <property type="match status" value="1"/>
</dbReference>
<dbReference type="InterPro" id="IPR028598">
    <property type="entry name" value="BOP1/Erb1"/>
</dbReference>
<dbReference type="InterPro" id="IPR012953">
    <property type="entry name" value="BOP1_N_dom"/>
</dbReference>
<dbReference type="InterPro" id="IPR015943">
    <property type="entry name" value="WD40/YVTN_repeat-like_dom_sf"/>
</dbReference>
<dbReference type="InterPro" id="IPR019775">
    <property type="entry name" value="WD40_repeat_CS"/>
</dbReference>
<dbReference type="InterPro" id="IPR036322">
    <property type="entry name" value="WD40_repeat_dom_sf"/>
</dbReference>
<dbReference type="InterPro" id="IPR001680">
    <property type="entry name" value="WD40_rpt"/>
</dbReference>
<dbReference type="PANTHER" id="PTHR17605:SF0">
    <property type="entry name" value="RIBOSOME BIOGENESIS PROTEIN BOP1"/>
    <property type="match status" value="1"/>
</dbReference>
<dbReference type="PANTHER" id="PTHR17605">
    <property type="entry name" value="RIBOSOME BIOGENESIS PROTEIN BOP1 BLOCK OF PROLIFERATION 1 PROTEIN"/>
    <property type="match status" value="1"/>
</dbReference>
<dbReference type="Pfam" id="PF08145">
    <property type="entry name" value="BOP1NT"/>
    <property type="match status" value="1"/>
</dbReference>
<dbReference type="Pfam" id="PF00400">
    <property type="entry name" value="WD40"/>
    <property type="match status" value="4"/>
</dbReference>
<dbReference type="SMART" id="SM01035">
    <property type="entry name" value="BOP1NT"/>
    <property type="match status" value="1"/>
</dbReference>
<dbReference type="SMART" id="SM00320">
    <property type="entry name" value="WD40"/>
    <property type="match status" value="6"/>
</dbReference>
<dbReference type="SUPFAM" id="SSF50978">
    <property type="entry name" value="WD40 repeat-like"/>
    <property type="match status" value="1"/>
</dbReference>
<dbReference type="PROSITE" id="PS00678">
    <property type="entry name" value="WD_REPEATS_1"/>
    <property type="match status" value="1"/>
</dbReference>
<dbReference type="PROSITE" id="PS50082">
    <property type="entry name" value="WD_REPEATS_2"/>
    <property type="match status" value="2"/>
</dbReference>
<dbReference type="PROSITE" id="PS50294">
    <property type="entry name" value="WD_REPEATS_REGION"/>
    <property type="match status" value="2"/>
</dbReference>
<comment type="function">
    <text evidence="1">Component of the NOP7 complex, which is required for maturation of the 25S and 5.8S ribosomal RNAs and formation of the 60S ribosome.</text>
</comment>
<comment type="subunit">
    <text evidence="1">Component of the NOP7 complex, composed of erb1, ppp1/nop7 and ytm1/SPAC890.04c. The complex is held together by erb1, which interacts with ppp1/nop7 via its N-terminal domain and with ytm1/SPAC890.04c via a high-affinity interaction between the seven-bladed beta-propeller domains of the 2 proteins. The NOP7 complex associates with the 66S pre-ribosome.</text>
</comment>
<comment type="subcellular location">
    <subcellularLocation>
        <location evidence="1 3">Nucleus</location>
        <location evidence="1 3">Nucleolus</location>
    </subcellularLocation>
    <subcellularLocation>
        <location evidence="1">Nucleus</location>
        <location evidence="1">Nucleoplasm</location>
    </subcellularLocation>
</comment>
<comment type="similarity">
    <text evidence="1">Belongs to the WD repeat BOP1/ERB1 family.</text>
</comment>
<reference key="1">
    <citation type="journal article" date="2002" name="Nature">
        <title>The genome sequence of Schizosaccharomyces pombe.</title>
        <authorList>
            <person name="Wood V."/>
            <person name="Gwilliam R."/>
            <person name="Rajandream M.A."/>
            <person name="Lyne M.H."/>
            <person name="Lyne R."/>
            <person name="Stewart A."/>
            <person name="Sgouros J.G."/>
            <person name="Peat N."/>
            <person name="Hayles J."/>
            <person name="Baker S.G."/>
            <person name="Basham D."/>
            <person name="Bowman S."/>
            <person name="Brooks K."/>
            <person name="Brown D."/>
            <person name="Brown S."/>
            <person name="Chillingworth T."/>
            <person name="Churcher C.M."/>
            <person name="Collins M."/>
            <person name="Connor R."/>
            <person name="Cronin A."/>
            <person name="Davis P."/>
            <person name="Feltwell T."/>
            <person name="Fraser A."/>
            <person name="Gentles S."/>
            <person name="Goble A."/>
            <person name="Hamlin N."/>
            <person name="Harris D.E."/>
            <person name="Hidalgo J."/>
            <person name="Hodgson G."/>
            <person name="Holroyd S."/>
            <person name="Hornsby T."/>
            <person name="Howarth S."/>
            <person name="Huckle E.J."/>
            <person name="Hunt S."/>
            <person name="Jagels K."/>
            <person name="James K.D."/>
            <person name="Jones L."/>
            <person name="Jones M."/>
            <person name="Leather S."/>
            <person name="McDonald S."/>
            <person name="McLean J."/>
            <person name="Mooney P."/>
            <person name="Moule S."/>
            <person name="Mungall K.L."/>
            <person name="Murphy L.D."/>
            <person name="Niblett D."/>
            <person name="Odell C."/>
            <person name="Oliver K."/>
            <person name="O'Neil S."/>
            <person name="Pearson D."/>
            <person name="Quail M.A."/>
            <person name="Rabbinowitsch E."/>
            <person name="Rutherford K.M."/>
            <person name="Rutter S."/>
            <person name="Saunders D."/>
            <person name="Seeger K."/>
            <person name="Sharp S."/>
            <person name="Skelton J."/>
            <person name="Simmonds M.N."/>
            <person name="Squares R."/>
            <person name="Squares S."/>
            <person name="Stevens K."/>
            <person name="Taylor K."/>
            <person name="Taylor R.G."/>
            <person name="Tivey A."/>
            <person name="Walsh S.V."/>
            <person name="Warren T."/>
            <person name="Whitehead S."/>
            <person name="Woodward J.R."/>
            <person name="Volckaert G."/>
            <person name="Aert R."/>
            <person name="Robben J."/>
            <person name="Grymonprez B."/>
            <person name="Weltjens I."/>
            <person name="Vanstreels E."/>
            <person name="Rieger M."/>
            <person name="Schaefer M."/>
            <person name="Mueller-Auer S."/>
            <person name="Gabel C."/>
            <person name="Fuchs M."/>
            <person name="Duesterhoeft A."/>
            <person name="Fritzc C."/>
            <person name="Holzer E."/>
            <person name="Moestl D."/>
            <person name="Hilbert H."/>
            <person name="Borzym K."/>
            <person name="Langer I."/>
            <person name="Beck A."/>
            <person name="Lehrach H."/>
            <person name="Reinhardt R."/>
            <person name="Pohl T.M."/>
            <person name="Eger P."/>
            <person name="Zimmermann W."/>
            <person name="Wedler H."/>
            <person name="Wambutt R."/>
            <person name="Purnelle B."/>
            <person name="Goffeau A."/>
            <person name="Cadieu E."/>
            <person name="Dreano S."/>
            <person name="Gloux S."/>
            <person name="Lelaure V."/>
            <person name="Mottier S."/>
            <person name="Galibert F."/>
            <person name="Aves S.J."/>
            <person name="Xiang Z."/>
            <person name="Hunt C."/>
            <person name="Moore K."/>
            <person name="Hurst S.M."/>
            <person name="Lucas M."/>
            <person name="Rochet M."/>
            <person name="Gaillardin C."/>
            <person name="Tallada V.A."/>
            <person name="Garzon A."/>
            <person name="Thode G."/>
            <person name="Daga R.R."/>
            <person name="Cruzado L."/>
            <person name="Jimenez J."/>
            <person name="Sanchez M."/>
            <person name="del Rey F."/>
            <person name="Benito J."/>
            <person name="Dominguez A."/>
            <person name="Revuelta J.L."/>
            <person name="Moreno S."/>
            <person name="Armstrong J."/>
            <person name="Forsburg S.L."/>
            <person name="Cerutti L."/>
            <person name="Lowe T."/>
            <person name="McCombie W.R."/>
            <person name="Paulsen I."/>
            <person name="Potashkin J."/>
            <person name="Shpakovski G.V."/>
            <person name="Ussery D."/>
            <person name="Barrell B.G."/>
            <person name="Nurse P."/>
        </authorList>
    </citation>
    <scope>NUCLEOTIDE SEQUENCE [LARGE SCALE GENOMIC DNA]</scope>
    <source>
        <strain>972 / ATCC 24843</strain>
    </source>
</reference>
<reference key="2">
    <citation type="journal article" date="2011" name="Science">
        <title>Comparative functional genomics of the fission yeasts.</title>
        <authorList>
            <person name="Rhind N."/>
            <person name="Chen Z."/>
            <person name="Yassour M."/>
            <person name="Thompson D.A."/>
            <person name="Haas B.J."/>
            <person name="Habib N."/>
            <person name="Wapinski I."/>
            <person name="Roy S."/>
            <person name="Lin M.F."/>
            <person name="Heiman D.I."/>
            <person name="Young S.K."/>
            <person name="Furuya K."/>
            <person name="Guo Y."/>
            <person name="Pidoux A."/>
            <person name="Chen H.M."/>
            <person name="Robbertse B."/>
            <person name="Goldberg J.M."/>
            <person name="Aoki K."/>
            <person name="Bayne E.H."/>
            <person name="Berlin A.M."/>
            <person name="Desjardins C.A."/>
            <person name="Dobbs E."/>
            <person name="Dukaj L."/>
            <person name="Fan L."/>
            <person name="FitzGerald M.G."/>
            <person name="French C."/>
            <person name="Gujja S."/>
            <person name="Hansen K."/>
            <person name="Keifenheim D."/>
            <person name="Levin J.Z."/>
            <person name="Mosher R.A."/>
            <person name="Mueller C.A."/>
            <person name="Pfiffner J."/>
            <person name="Priest M."/>
            <person name="Russ C."/>
            <person name="Smialowska A."/>
            <person name="Swoboda P."/>
            <person name="Sykes S.M."/>
            <person name="Vaughn M."/>
            <person name="Vengrova S."/>
            <person name="Yoder R."/>
            <person name="Zeng Q."/>
            <person name="Allshire R."/>
            <person name="Baulcombe D."/>
            <person name="Birren B.W."/>
            <person name="Brown W."/>
            <person name="Ekwall K."/>
            <person name="Kellis M."/>
            <person name="Leatherwood J."/>
            <person name="Levin H."/>
            <person name="Margalit H."/>
            <person name="Martienssen R."/>
            <person name="Nieduszynski C.A."/>
            <person name="Spatafora J.W."/>
            <person name="Friedman N."/>
            <person name="Dalgaard J.Z."/>
            <person name="Baumann P."/>
            <person name="Niki H."/>
            <person name="Regev A."/>
            <person name="Nusbaum C."/>
        </authorList>
    </citation>
    <scope>REVISION OF GENE MODEL</scope>
</reference>
<reference key="3">
    <citation type="journal article" date="2006" name="Nat. Biotechnol.">
        <title>ORFeome cloning and global analysis of protein localization in the fission yeast Schizosaccharomyces pombe.</title>
        <authorList>
            <person name="Matsuyama A."/>
            <person name="Arai R."/>
            <person name="Yashiroda Y."/>
            <person name="Shirai A."/>
            <person name="Kamata A."/>
            <person name="Sekido S."/>
            <person name="Kobayashi Y."/>
            <person name="Hashimoto A."/>
            <person name="Hamamoto M."/>
            <person name="Hiraoka Y."/>
            <person name="Horinouchi S."/>
            <person name="Yoshida M."/>
        </authorList>
    </citation>
    <scope>SUBCELLULAR LOCATION [LARGE SCALE ANALYSIS]</scope>
</reference>
<reference key="4">
    <citation type="journal article" date="2008" name="J. Proteome Res.">
        <title>Phosphoproteome analysis of fission yeast.</title>
        <authorList>
            <person name="Wilson-Grady J.T."/>
            <person name="Villen J."/>
            <person name="Gygi S.P."/>
        </authorList>
    </citation>
    <scope>PHOSPHORYLATION [LARGE SCALE ANALYSIS] AT SER-434</scope>
    <scope>IDENTIFICATION BY MASS SPECTROMETRY</scope>
</reference>
<protein>
    <recommendedName>
        <fullName evidence="1">Ribosome biogenesis protein erb1</fullName>
    </recommendedName>
    <alternativeName>
        <fullName evidence="1">Eukaryotic ribosome biogenesis protein 1</fullName>
    </alternativeName>
</protein>
<name>ERB1_SCHPO</name>
<keyword id="KW-0002">3D-structure</keyword>
<keyword id="KW-0539">Nucleus</keyword>
<keyword id="KW-0597">Phosphoprotein</keyword>
<keyword id="KW-1185">Reference proteome</keyword>
<keyword id="KW-0677">Repeat</keyword>
<keyword id="KW-0690">Ribosome biogenesis</keyword>
<keyword id="KW-0698">rRNA processing</keyword>
<keyword id="KW-0853">WD repeat</keyword>
<gene>
    <name type="primary">erb1</name>
    <name type="ORF">SPBC4F6.13c</name>
</gene>
<accession>O74399</accession>
<organism>
    <name type="scientific">Schizosaccharomyces pombe (strain 972 / ATCC 24843)</name>
    <name type="common">Fission yeast</name>
    <dbReference type="NCBI Taxonomy" id="284812"/>
    <lineage>
        <taxon>Eukaryota</taxon>
        <taxon>Fungi</taxon>
        <taxon>Dikarya</taxon>
        <taxon>Ascomycota</taxon>
        <taxon>Taphrinomycotina</taxon>
        <taxon>Schizosaccharomycetes</taxon>
        <taxon>Schizosaccharomycetales</taxon>
        <taxon>Schizosaccharomycetaceae</taxon>
        <taxon>Schizosaccharomyces</taxon>
    </lineage>
</organism>
<evidence type="ECO:0000255" key="1">
    <source>
        <dbReference type="HAMAP-Rule" id="MF_03027"/>
    </source>
</evidence>
<evidence type="ECO:0000256" key="2">
    <source>
        <dbReference type="SAM" id="MobiDB-lite"/>
    </source>
</evidence>
<evidence type="ECO:0000269" key="3">
    <source>
    </source>
</evidence>
<evidence type="ECO:0000269" key="4">
    <source>
    </source>
</evidence>
<evidence type="ECO:0007829" key="5">
    <source>
        <dbReference type="PDB" id="8ETG"/>
    </source>
</evidence>
<evidence type="ECO:0007829" key="6">
    <source>
        <dbReference type="PDB" id="8EUY"/>
    </source>
</evidence>
<sequence>METGMNRKRSRSKRANSNVGVEKDKEKEKSKGVSNVPNEVETESSSHEPSFKKDVDEEIPSLTAELSEEEEGEYSSESGRSTPELSPDDFEDADDEEEFEEIDAGYSSDSSTEDVAPGLYESPYDENLYINYDIDGKKITRPATPAALDSLIASIDKDKGWTGIVDPMTGKPVNLTTEELGLLKRLAQSEIPDENFDPYPDYDDFFTNTVRETPLSSAPEPKRRFAPSKHEQKRILQLAYAIRKGRILTSEQRAERERESQSNYADHDLWADDDQATVNQRKLDYAPAPKLPPPSHEESYNPPEEYLKQSSDFPKKYKSLRVVPAYSNLIKEKFERCLDLYLAPRVRRTKLNIDPESLLPKLPTPSELRPFPTRCTNVFIGHKGRVRCLSVHVSGNWLASGGDDGVLRIWEVMTGRCVWKCSLDSFGNAHNIDSDEDAVNESLSHSTKSSIIQSLAWGPLSDSPVLAVAVDETVYFITPPIFSDEQIEASKELFTSAPYQESSAIWRRGAKQSLQLHGGIVHATVSTPSSIKSLSWHRRGDYLATSSPTSSSQAVLIHQLSRGASQSPFSKSKGSVQAVTFHPTMPYLLVATQRYVRIYNLVKQELVKTLLTGVKWVSSLSVHSSGDHVIIGSYDKRLCWFDLDFSSKPYKNLRYHSRALRDVSYHPSLPLFCSGSDDGDVQVFHGRVYSDLLANPLIVPLKILRNHKVVDNVGVLSTCWHPKEAWLFSAGAGGEIRMWT</sequence>
<proteinExistence type="evidence at protein level"/>